<sequence>MIRAAIVGATGYTGAELVRLLARHREVELVGLTSRQYADQPYANVYPHLSGQVDLACQSQDIDHITDMADVVFLALPHGLSVPWVAECVRKGKKVVDLGADFRLRRAAVYEQWYHVTHEAPELLAEAVYGLPELKREQIQKARIIANPGCYPTASLLSIAPLCGQGLIREDRLIIDAKSGVSGAGRNANLAIIYGEVNENVKAYNVAKHRHNPEIEQEVAERAGLDPDAMAITFTPHLMPMTRGILTTVYADLKEGVQPTSEEVRNLYRQFYAGEPFIHVMDEGVWPQTKWSYGSNHAYIGLTVEARTGRVIITTAIDNLVKGASGQAIQNMNILFGLPETTGIEAAGIYP</sequence>
<name>ARGC_HELMI</name>
<protein>
    <recommendedName>
        <fullName evidence="1">N-acetyl-gamma-glutamyl-phosphate reductase</fullName>
        <shortName evidence="1">AGPR</shortName>
        <ecNumber evidence="1">1.2.1.38</ecNumber>
    </recommendedName>
    <alternativeName>
        <fullName evidence="1">N-acetyl-glutamate semialdehyde dehydrogenase</fullName>
        <shortName evidence="1">NAGSA dehydrogenase</shortName>
    </alternativeName>
</protein>
<accession>B0TCA6</accession>
<gene>
    <name evidence="1" type="primary">argC</name>
    <name type="ordered locus">Helmi_13800</name>
    <name type="ORF">HM1_1428</name>
</gene>
<dbReference type="EC" id="1.2.1.38" evidence="1"/>
<dbReference type="EMBL" id="CP000930">
    <property type="protein sequence ID" value="ABZ84005.1"/>
    <property type="molecule type" value="Genomic_DNA"/>
</dbReference>
<dbReference type="RefSeq" id="WP_012282521.1">
    <property type="nucleotide sequence ID" value="NC_010337.2"/>
</dbReference>
<dbReference type="SMR" id="B0TCA6"/>
<dbReference type="STRING" id="498761.HM1_1428"/>
<dbReference type="KEGG" id="hmo:HM1_1428"/>
<dbReference type="eggNOG" id="COG0002">
    <property type="taxonomic scope" value="Bacteria"/>
</dbReference>
<dbReference type="HOGENOM" id="CLU_006384_0_1_9"/>
<dbReference type="OrthoDB" id="9801289at2"/>
<dbReference type="UniPathway" id="UPA00068">
    <property type="reaction ID" value="UER00108"/>
</dbReference>
<dbReference type="Proteomes" id="UP000008550">
    <property type="component" value="Chromosome"/>
</dbReference>
<dbReference type="GO" id="GO:0005737">
    <property type="term" value="C:cytoplasm"/>
    <property type="evidence" value="ECO:0007669"/>
    <property type="project" value="UniProtKB-SubCell"/>
</dbReference>
<dbReference type="GO" id="GO:0003942">
    <property type="term" value="F:N-acetyl-gamma-glutamyl-phosphate reductase activity"/>
    <property type="evidence" value="ECO:0007669"/>
    <property type="project" value="UniProtKB-UniRule"/>
</dbReference>
<dbReference type="GO" id="GO:0051287">
    <property type="term" value="F:NAD binding"/>
    <property type="evidence" value="ECO:0007669"/>
    <property type="project" value="InterPro"/>
</dbReference>
<dbReference type="GO" id="GO:0070401">
    <property type="term" value="F:NADP+ binding"/>
    <property type="evidence" value="ECO:0007669"/>
    <property type="project" value="InterPro"/>
</dbReference>
<dbReference type="GO" id="GO:0006526">
    <property type="term" value="P:L-arginine biosynthetic process"/>
    <property type="evidence" value="ECO:0007669"/>
    <property type="project" value="UniProtKB-UniRule"/>
</dbReference>
<dbReference type="CDD" id="cd23934">
    <property type="entry name" value="AGPR_1_C"/>
    <property type="match status" value="1"/>
</dbReference>
<dbReference type="CDD" id="cd17895">
    <property type="entry name" value="AGPR_1_N"/>
    <property type="match status" value="1"/>
</dbReference>
<dbReference type="FunFam" id="3.30.360.10:FF:000014">
    <property type="entry name" value="N-acetyl-gamma-glutamyl-phosphate reductase"/>
    <property type="match status" value="1"/>
</dbReference>
<dbReference type="Gene3D" id="3.30.360.10">
    <property type="entry name" value="Dihydrodipicolinate Reductase, domain 2"/>
    <property type="match status" value="1"/>
</dbReference>
<dbReference type="Gene3D" id="3.40.50.720">
    <property type="entry name" value="NAD(P)-binding Rossmann-like Domain"/>
    <property type="match status" value="1"/>
</dbReference>
<dbReference type="HAMAP" id="MF_00150">
    <property type="entry name" value="ArgC_type1"/>
    <property type="match status" value="1"/>
</dbReference>
<dbReference type="InterPro" id="IPR023013">
    <property type="entry name" value="AGPR_AS"/>
</dbReference>
<dbReference type="InterPro" id="IPR000706">
    <property type="entry name" value="AGPR_type-1"/>
</dbReference>
<dbReference type="InterPro" id="IPR036291">
    <property type="entry name" value="NAD(P)-bd_dom_sf"/>
</dbReference>
<dbReference type="InterPro" id="IPR050085">
    <property type="entry name" value="NAGSA_dehydrogenase"/>
</dbReference>
<dbReference type="InterPro" id="IPR000534">
    <property type="entry name" value="Semialdehyde_DH_NAD-bd"/>
</dbReference>
<dbReference type="NCBIfam" id="TIGR01850">
    <property type="entry name" value="argC"/>
    <property type="match status" value="1"/>
</dbReference>
<dbReference type="PANTHER" id="PTHR32338:SF10">
    <property type="entry name" value="N-ACETYL-GAMMA-GLUTAMYL-PHOSPHATE REDUCTASE, CHLOROPLASTIC-RELATED"/>
    <property type="match status" value="1"/>
</dbReference>
<dbReference type="PANTHER" id="PTHR32338">
    <property type="entry name" value="N-ACETYL-GAMMA-GLUTAMYL-PHOSPHATE REDUCTASE, CHLOROPLASTIC-RELATED-RELATED"/>
    <property type="match status" value="1"/>
</dbReference>
<dbReference type="Pfam" id="PF01118">
    <property type="entry name" value="Semialdhyde_dh"/>
    <property type="match status" value="1"/>
</dbReference>
<dbReference type="Pfam" id="PF22698">
    <property type="entry name" value="Semialdhyde_dhC_1"/>
    <property type="match status" value="1"/>
</dbReference>
<dbReference type="SMART" id="SM00859">
    <property type="entry name" value="Semialdhyde_dh"/>
    <property type="match status" value="1"/>
</dbReference>
<dbReference type="SUPFAM" id="SSF55347">
    <property type="entry name" value="Glyceraldehyde-3-phosphate dehydrogenase-like, C-terminal domain"/>
    <property type="match status" value="1"/>
</dbReference>
<dbReference type="SUPFAM" id="SSF51735">
    <property type="entry name" value="NAD(P)-binding Rossmann-fold domains"/>
    <property type="match status" value="1"/>
</dbReference>
<dbReference type="PROSITE" id="PS01224">
    <property type="entry name" value="ARGC"/>
    <property type="match status" value="1"/>
</dbReference>
<proteinExistence type="inferred from homology"/>
<evidence type="ECO:0000255" key="1">
    <source>
        <dbReference type="HAMAP-Rule" id="MF_00150"/>
    </source>
</evidence>
<reference key="1">
    <citation type="journal article" date="2008" name="J. Bacteriol.">
        <title>The genome of Heliobacterium modesticaldum, a phototrophic representative of the Firmicutes containing the simplest photosynthetic apparatus.</title>
        <authorList>
            <person name="Sattley W.M."/>
            <person name="Madigan M.T."/>
            <person name="Swingley W.D."/>
            <person name="Cheung P.C."/>
            <person name="Clocksin K.M."/>
            <person name="Conrad A.L."/>
            <person name="Dejesa L.C."/>
            <person name="Honchak B.M."/>
            <person name="Jung D.O."/>
            <person name="Karbach L.E."/>
            <person name="Kurdoglu A."/>
            <person name="Lahiri S."/>
            <person name="Mastrian S.D."/>
            <person name="Page L.E."/>
            <person name="Taylor H.L."/>
            <person name="Wang Z.T."/>
            <person name="Raymond J."/>
            <person name="Chen M."/>
            <person name="Blankenship R.E."/>
            <person name="Touchman J.W."/>
        </authorList>
    </citation>
    <scope>NUCLEOTIDE SEQUENCE [LARGE SCALE GENOMIC DNA]</scope>
    <source>
        <strain>ATCC 51547 / Ice1</strain>
    </source>
</reference>
<feature type="chain" id="PRO_1000096726" description="N-acetyl-gamma-glutamyl-phosphate reductase">
    <location>
        <begin position="1"/>
        <end position="351"/>
    </location>
</feature>
<feature type="active site" evidence="1">
    <location>
        <position position="150"/>
    </location>
</feature>
<organism>
    <name type="scientific">Heliobacterium modesticaldum (strain ATCC 51547 / Ice1)</name>
    <dbReference type="NCBI Taxonomy" id="498761"/>
    <lineage>
        <taxon>Bacteria</taxon>
        <taxon>Bacillati</taxon>
        <taxon>Bacillota</taxon>
        <taxon>Clostridia</taxon>
        <taxon>Eubacteriales</taxon>
        <taxon>Heliobacteriaceae</taxon>
        <taxon>Heliomicrobium</taxon>
    </lineage>
</organism>
<keyword id="KW-0028">Amino-acid biosynthesis</keyword>
<keyword id="KW-0055">Arginine biosynthesis</keyword>
<keyword id="KW-0963">Cytoplasm</keyword>
<keyword id="KW-0521">NADP</keyword>
<keyword id="KW-0560">Oxidoreductase</keyword>
<keyword id="KW-1185">Reference proteome</keyword>
<comment type="function">
    <text evidence="1">Catalyzes the NADPH-dependent reduction of N-acetyl-5-glutamyl phosphate to yield N-acetyl-L-glutamate 5-semialdehyde.</text>
</comment>
<comment type="catalytic activity">
    <reaction evidence="1">
        <text>N-acetyl-L-glutamate 5-semialdehyde + phosphate + NADP(+) = N-acetyl-L-glutamyl 5-phosphate + NADPH + H(+)</text>
        <dbReference type="Rhea" id="RHEA:21588"/>
        <dbReference type="ChEBI" id="CHEBI:15378"/>
        <dbReference type="ChEBI" id="CHEBI:29123"/>
        <dbReference type="ChEBI" id="CHEBI:43474"/>
        <dbReference type="ChEBI" id="CHEBI:57783"/>
        <dbReference type="ChEBI" id="CHEBI:57936"/>
        <dbReference type="ChEBI" id="CHEBI:58349"/>
        <dbReference type="EC" id="1.2.1.38"/>
    </reaction>
</comment>
<comment type="pathway">
    <text evidence="1">Amino-acid biosynthesis; L-arginine biosynthesis; N(2)-acetyl-L-ornithine from L-glutamate: step 3/4.</text>
</comment>
<comment type="subcellular location">
    <subcellularLocation>
        <location evidence="1">Cytoplasm</location>
    </subcellularLocation>
</comment>
<comment type="similarity">
    <text evidence="1">Belongs to the NAGSA dehydrogenase family. Type 1 subfamily.</text>
</comment>